<accession>B2G6Q8</accession>
<comment type="function">
    <text evidence="1">Binds directly to 16S ribosomal RNA.</text>
</comment>
<comment type="similarity">
    <text evidence="1">Belongs to the bacterial ribosomal protein bS20 family.</text>
</comment>
<keyword id="KW-0687">Ribonucleoprotein</keyword>
<keyword id="KW-0689">Ribosomal protein</keyword>
<keyword id="KW-0694">RNA-binding</keyword>
<keyword id="KW-0699">rRNA-binding</keyword>
<gene>
    <name evidence="1" type="primary">rpsT</name>
    <name type="ordered locus">LAR_0624</name>
</gene>
<organism>
    <name type="scientific">Limosilactobacillus reuteri subsp. reuteri (strain JCM 1112)</name>
    <name type="common">Lactobacillus reuteri</name>
    <dbReference type="NCBI Taxonomy" id="557433"/>
    <lineage>
        <taxon>Bacteria</taxon>
        <taxon>Bacillati</taxon>
        <taxon>Bacillota</taxon>
        <taxon>Bacilli</taxon>
        <taxon>Lactobacillales</taxon>
        <taxon>Lactobacillaceae</taxon>
        <taxon>Limosilactobacillus</taxon>
    </lineage>
</organism>
<dbReference type="EMBL" id="AP007281">
    <property type="protein sequence ID" value="BAG25140.1"/>
    <property type="molecule type" value="Genomic_DNA"/>
</dbReference>
<dbReference type="RefSeq" id="WP_003666832.1">
    <property type="nucleotide sequence ID" value="NC_010609.1"/>
</dbReference>
<dbReference type="SMR" id="B2G6Q8"/>
<dbReference type="GeneID" id="77190806"/>
<dbReference type="KEGG" id="lrf:LAR_0624"/>
<dbReference type="HOGENOM" id="CLU_160655_1_1_9"/>
<dbReference type="GO" id="GO:0005829">
    <property type="term" value="C:cytosol"/>
    <property type="evidence" value="ECO:0007669"/>
    <property type="project" value="TreeGrafter"/>
</dbReference>
<dbReference type="GO" id="GO:0015935">
    <property type="term" value="C:small ribosomal subunit"/>
    <property type="evidence" value="ECO:0007669"/>
    <property type="project" value="TreeGrafter"/>
</dbReference>
<dbReference type="GO" id="GO:0070181">
    <property type="term" value="F:small ribosomal subunit rRNA binding"/>
    <property type="evidence" value="ECO:0007669"/>
    <property type="project" value="TreeGrafter"/>
</dbReference>
<dbReference type="GO" id="GO:0003735">
    <property type="term" value="F:structural constituent of ribosome"/>
    <property type="evidence" value="ECO:0007669"/>
    <property type="project" value="InterPro"/>
</dbReference>
<dbReference type="GO" id="GO:0006412">
    <property type="term" value="P:translation"/>
    <property type="evidence" value="ECO:0007669"/>
    <property type="project" value="UniProtKB-UniRule"/>
</dbReference>
<dbReference type="Gene3D" id="1.20.58.110">
    <property type="entry name" value="Ribosomal protein S20"/>
    <property type="match status" value="1"/>
</dbReference>
<dbReference type="HAMAP" id="MF_00500">
    <property type="entry name" value="Ribosomal_bS20"/>
    <property type="match status" value="1"/>
</dbReference>
<dbReference type="InterPro" id="IPR002583">
    <property type="entry name" value="Ribosomal_bS20"/>
</dbReference>
<dbReference type="InterPro" id="IPR036510">
    <property type="entry name" value="Ribosomal_bS20_sf"/>
</dbReference>
<dbReference type="NCBIfam" id="TIGR00029">
    <property type="entry name" value="S20"/>
    <property type="match status" value="1"/>
</dbReference>
<dbReference type="PANTHER" id="PTHR33398">
    <property type="entry name" value="30S RIBOSOMAL PROTEIN S20"/>
    <property type="match status" value="1"/>
</dbReference>
<dbReference type="PANTHER" id="PTHR33398:SF1">
    <property type="entry name" value="SMALL RIBOSOMAL SUBUNIT PROTEIN BS20C"/>
    <property type="match status" value="1"/>
</dbReference>
<dbReference type="Pfam" id="PF01649">
    <property type="entry name" value="Ribosomal_S20p"/>
    <property type="match status" value="1"/>
</dbReference>
<dbReference type="SUPFAM" id="SSF46992">
    <property type="entry name" value="Ribosomal protein S20"/>
    <property type="match status" value="1"/>
</dbReference>
<reference key="1">
    <citation type="journal article" date="2008" name="DNA Res.">
        <title>Comparative genome analysis of Lactobacillus reuteri and Lactobacillus fermentum reveal a genomic island for reuterin and cobalamin production.</title>
        <authorList>
            <person name="Morita H."/>
            <person name="Toh H."/>
            <person name="Fukuda S."/>
            <person name="Horikawa H."/>
            <person name="Oshima K."/>
            <person name="Suzuki T."/>
            <person name="Murakami M."/>
            <person name="Hisamatsu S."/>
            <person name="Kato Y."/>
            <person name="Takizawa T."/>
            <person name="Fukuoka H."/>
            <person name="Yoshimura T."/>
            <person name="Itoh K."/>
            <person name="O'Sullivan D.J."/>
            <person name="McKay L.L."/>
            <person name="Ohno H."/>
            <person name="Kikuchi J."/>
            <person name="Masaoka T."/>
            <person name="Hattori M."/>
        </authorList>
    </citation>
    <scope>NUCLEOTIDE SEQUENCE [LARGE SCALE GENOMIC DNA]</scope>
    <source>
        <strain>JCM 1112</strain>
    </source>
</reference>
<name>RS20_LIMRJ</name>
<feature type="chain" id="PRO_1000126468" description="Small ribosomal subunit protein bS20">
    <location>
        <begin position="1"/>
        <end position="84"/>
    </location>
</feature>
<evidence type="ECO:0000255" key="1">
    <source>
        <dbReference type="HAMAP-Rule" id="MF_00500"/>
    </source>
</evidence>
<evidence type="ECO:0000305" key="2"/>
<sequence>MPIIKSAIERVRTSEKAEARNASQLSQMRTAIKKFDKAKLAGADNLDDLYKAAISAIDRAHSKGLIKANKAARDKSRLSARYAK</sequence>
<proteinExistence type="inferred from homology"/>
<protein>
    <recommendedName>
        <fullName evidence="1">Small ribosomal subunit protein bS20</fullName>
    </recommendedName>
    <alternativeName>
        <fullName evidence="2">30S ribosomal protein S20</fullName>
    </alternativeName>
</protein>